<keyword id="KW-0020">Allergen</keyword>
<keyword id="KW-0903">Direct protein sequencing</keyword>
<sequence length="55" mass="6407">DIYNYMEPYVSKVDPTDYFGNEQARTAWVDSGAQLGELSYGVLFNIQYVNYWFAP</sequence>
<evidence type="ECO:0000269" key="1">
    <source>
    </source>
</evidence>
<evidence type="ECO:0000305" key="2"/>
<reference key="1">
    <citation type="journal article" date="1996" name="J. Allergy Clin. Immunol.">
        <title>Characterization of Dac g 4, a major basic allergen from Dactylis glomerata pollen.</title>
        <authorList>
            <person name="Leduc-Brodard V."/>
            <person name="Inacio F."/>
            <person name="Jaquinod M."/>
            <person name="Forest E."/>
            <person name="David B."/>
            <person name="Peltre G."/>
        </authorList>
    </citation>
    <scope>PROTEIN SEQUENCE</scope>
    <scope>MASS SPECTROMETRY</scope>
    <source>
        <tissue>Pollen</tissue>
    </source>
</reference>
<proteinExistence type="evidence at protein level"/>
<organism>
    <name type="scientific">Dactylis glomerata</name>
    <name type="common">Orchard grass</name>
    <name type="synonym">Cock's-foot grass</name>
    <dbReference type="NCBI Taxonomy" id="4509"/>
    <lineage>
        <taxon>Eukaryota</taxon>
        <taxon>Viridiplantae</taxon>
        <taxon>Streptophyta</taxon>
        <taxon>Embryophyta</taxon>
        <taxon>Tracheophyta</taxon>
        <taxon>Spermatophyta</taxon>
        <taxon>Magnoliopsida</taxon>
        <taxon>Liliopsida</taxon>
        <taxon>Poales</taxon>
        <taxon>Poaceae</taxon>
        <taxon>BOP clade</taxon>
        <taxon>Pooideae</taxon>
        <taxon>Poodae</taxon>
        <taxon>Poeae</taxon>
        <taxon>Poeae Chloroplast Group 2 (Poeae type)</taxon>
        <taxon>Loliodinae</taxon>
        <taxon>Dactylidinae</taxon>
        <taxon>Dactylis</taxon>
    </lineage>
</organism>
<feature type="chain" id="PRO_0000096553" description="Major pollen allergen Dac g 4">
    <location>
        <begin position="1" status="less than"/>
        <end position="55" status="greater than"/>
    </location>
</feature>
<feature type="non-consecutive residues" evidence="2">
    <location>
        <begin position="12"/>
        <end position="13"/>
    </location>
</feature>
<feature type="non-consecutive residues" evidence="2">
    <location>
        <begin position="23"/>
        <end position="24"/>
    </location>
</feature>
<feature type="non-consecutive residues" evidence="2">
    <location>
        <begin position="40"/>
        <end position="41"/>
    </location>
</feature>
<feature type="non-terminal residue">
    <location>
        <position position="1"/>
    </location>
</feature>
<feature type="non-terminal residue">
    <location>
        <position position="55"/>
    </location>
</feature>
<name>MPAG4_DACGL</name>
<accession>P82946</accession>
<comment type="mass spectrometry" mass="59185.0" error="30.0" method="MALDI" evidence="1"/>
<comment type="allergen">
    <text>Causes an allergic reaction in human. Causes grass pollen allergy.</text>
</comment>
<comment type="miscellaneous">
    <text>On the 2D-gel the determined pI of this protein is: 10.4, its MW is: 60 kDa.</text>
</comment>
<dbReference type="Allergome" id="285">
    <property type="allergen name" value="Dac g 4"/>
</dbReference>
<dbReference type="Allergome" id="3242">
    <property type="allergen name" value="Dac g 4.0101"/>
</dbReference>
<protein>
    <recommendedName>
        <fullName>Major pollen allergen Dac g 4</fullName>
    </recommendedName>
    <allergenName>Dac g 4</allergenName>
</protein>